<accession>P25025</accession>
<accession>Q8IUZ1</accession>
<accession>Q9P2T6</accession>
<accession>Q9P2T7</accession>
<organism>
    <name type="scientific">Homo sapiens</name>
    <name type="common">Human</name>
    <dbReference type="NCBI Taxonomy" id="9606"/>
    <lineage>
        <taxon>Eukaryota</taxon>
        <taxon>Metazoa</taxon>
        <taxon>Chordata</taxon>
        <taxon>Craniata</taxon>
        <taxon>Vertebrata</taxon>
        <taxon>Euteleostomi</taxon>
        <taxon>Mammalia</taxon>
        <taxon>Eutheria</taxon>
        <taxon>Euarchontoglires</taxon>
        <taxon>Primates</taxon>
        <taxon>Haplorrhini</taxon>
        <taxon>Catarrhini</taxon>
        <taxon>Hominidae</taxon>
        <taxon>Homo</taxon>
    </lineage>
</organism>
<evidence type="ECO:0000255" key="1"/>
<evidence type="ECO:0000255" key="2">
    <source>
        <dbReference type="PROSITE-ProRule" id="PRU00521"/>
    </source>
</evidence>
<evidence type="ECO:0000269" key="3">
    <source>
    </source>
</evidence>
<evidence type="ECO:0000269" key="4">
    <source>
    </source>
</evidence>
<evidence type="ECO:0000269" key="5">
    <source>
    </source>
</evidence>
<evidence type="ECO:0000269" key="6">
    <source>
    </source>
</evidence>
<evidence type="ECO:0000269" key="7">
    <source>
    </source>
</evidence>
<evidence type="ECO:0000269" key="8">
    <source>
    </source>
</evidence>
<evidence type="ECO:0000305" key="9">
    <source>
    </source>
</evidence>
<evidence type="ECO:0007829" key="10">
    <source>
        <dbReference type="PDB" id="6LFM"/>
    </source>
</evidence>
<evidence type="ECO:0007829" key="11">
    <source>
        <dbReference type="PDB" id="6LFO"/>
    </source>
</evidence>
<sequence length="360" mass="40759">MEDFNMESDSFEDFWKGEDLSNYSYSSTLPPFLLDAAPCEPESLEINKYFVVIIYALVFLLSLLGNSLVMLVILYSRVGRSVTDVYLLNLALADLLFALTLPIWAASKVNGWIFGTFLCKVVSLLKEVNFYSGILLLACISVDRYLAIVHATRTLTQKRYLVKFICLSIWGLSLLLALPVLLFRRTVYSSNVSPACYEDMGNNTANWRMLLRILPQSFGFIVPLLIMLFCYGFTLRTLFKAHMGQKHRAMRVIFAVVLIFLLCWLPYNLVLLADTLMRTQVIQETCERRNHIDRALDATEILGILHSCLNPLIYAFIGQKFRHGLLKILAIHGLISKDSLPKDSRPSFVGSSSGHTSTTL</sequence>
<dbReference type="EMBL" id="M73969">
    <property type="protein sequence ID" value="AAA83148.1"/>
    <property type="molecule type" value="mRNA"/>
</dbReference>
<dbReference type="EMBL" id="M94582">
    <property type="protein sequence ID" value="AAA36108.1"/>
    <property type="molecule type" value="mRNA"/>
</dbReference>
<dbReference type="EMBL" id="M99412">
    <property type="protein sequence ID" value="AAC14460.1"/>
    <property type="molecule type" value="Genomic_DNA"/>
</dbReference>
<dbReference type="EMBL" id="L19593">
    <property type="protein sequence ID" value="AAB59437.1"/>
    <property type="molecule type" value="mRNA"/>
</dbReference>
<dbReference type="EMBL" id="U11869">
    <property type="protein sequence ID" value="AAB60656.1"/>
    <property type="molecule type" value="Genomic_DNA"/>
</dbReference>
<dbReference type="EMBL" id="AY714242">
    <property type="protein sequence ID" value="AAT97985.1"/>
    <property type="molecule type" value="Genomic_DNA"/>
</dbReference>
<dbReference type="EMBL" id="BC037961">
    <property type="protein sequence ID" value="AAH37961.2"/>
    <property type="molecule type" value="mRNA"/>
</dbReference>
<dbReference type="EMBL" id="AB032733">
    <property type="protein sequence ID" value="BAA92295.1"/>
    <property type="molecule type" value="Genomic_DNA"/>
</dbReference>
<dbReference type="EMBL" id="AB032734">
    <property type="protein sequence ID" value="BAA92296.1"/>
    <property type="molecule type" value="Genomic_DNA"/>
</dbReference>
<dbReference type="CCDS" id="CCDS2408.1"/>
<dbReference type="PIR" id="I37898">
    <property type="entry name" value="A53611"/>
</dbReference>
<dbReference type="RefSeq" id="NP_001161770.1">
    <property type="nucleotide sequence ID" value="NM_001168298.2"/>
</dbReference>
<dbReference type="RefSeq" id="NP_001548.1">
    <property type="nucleotide sequence ID" value="NM_001557.4"/>
</dbReference>
<dbReference type="RefSeq" id="XP_005246587.1">
    <property type="nucleotide sequence ID" value="XM_005246530.4"/>
</dbReference>
<dbReference type="RefSeq" id="XP_016859479.1">
    <property type="nucleotide sequence ID" value="XM_017003990.1"/>
</dbReference>
<dbReference type="RefSeq" id="XP_016859480.1">
    <property type="nucleotide sequence ID" value="XM_017003991.2"/>
</dbReference>
<dbReference type="RefSeq" id="XP_016859481.1">
    <property type="nucleotide sequence ID" value="XM_017003992.1"/>
</dbReference>
<dbReference type="RefSeq" id="XP_047300143.1">
    <property type="nucleotide sequence ID" value="XM_047444187.1"/>
</dbReference>
<dbReference type="RefSeq" id="XP_047300144.1">
    <property type="nucleotide sequence ID" value="XM_047444188.1"/>
</dbReference>
<dbReference type="RefSeq" id="XP_047300145.1">
    <property type="nucleotide sequence ID" value="XM_047444189.1"/>
</dbReference>
<dbReference type="RefSeq" id="XP_047300146.1">
    <property type="nucleotide sequence ID" value="XM_047444190.1"/>
</dbReference>
<dbReference type="RefSeq" id="XP_054197796.1">
    <property type="nucleotide sequence ID" value="XM_054341821.1"/>
</dbReference>
<dbReference type="RefSeq" id="XP_054197797.1">
    <property type="nucleotide sequence ID" value="XM_054341822.1"/>
</dbReference>
<dbReference type="RefSeq" id="XP_054197798.1">
    <property type="nucleotide sequence ID" value="XM_054341823.1"/>
</dbReference>
<dbReference type="RefSeq" id="XP_054197799.1">
    <property type="nucleotide sequence ID" value="XM_054341824.1"/>
</dbReference>
<dbReference type="RefSeq" id="XP_054197800.1">
    <property type="nucleotide sequence ID" value="XM_054341825.1"/>
</dbReference>
<dbReference type="PDB" id="4Q3H">
    <property type="method" value="X-ray"/>
    <property type="resolution" value="1.44 A"/>
    <property type="chains" value="A/B=356-360"/>
</dbReference>
<dbReference type="PDB" id="5TYT">
    <property type="method" value="X-ray"/>
    <property type="resolution" value="2.40 A"/>
    <property type="chains" value="A/B/C/D=356-360"/>
</dbReference>
<dbReference type="PDB" id="6KVA">
    <property type="method" value="X-ray"/>
    <property type="resolution" value="2.20 A"/>
    <property type="chains" value="B/b=9-19"/>
</dbReference>
<dbReference type="PDB" id="6KVF">
    <property type="method" value="X-ray"/>
    <property type="resolution" value="2.79 A"/>
    <property type="chains" value="B/b=9-19"/>
</dbReference>
<dbReference type="PDB" id="6LFM">
    <property type="method" value="EM"/>
    <property type="resolution" value="3.50 A"/>
    <property type="chains" value="R=1-360"/>
</dbReference>
<dbReference type="PDB" id="6LFO">
    <property type="method" value="EM"/>
    <property type="resolution" value="3.40 A"/>
    <property type="chains" value="R=1-360"/>
</dbReference>
<dbReference type="PDB" id="8XVU">
    <property type="method" value="EM"/>
    <property type="resolution" value="3.09 A"/>
    <property type="chains" value="R=2-360"/>
</dbReference>
<dbReference type="PDB" id="8XWA">
    <property type="method" value="EM"/>
    <property type="resolution" value="3.48 A"/>
    <property type="chains" value="R=2-360"/>
</dbReference>
<dbReference type="PDB" id="8XWF">
    <property type="method" value="EM"/>
    <property type="resolution" value="3.65 A"/>
    <property type="chains" value="R=2-360"/>
</dbReference>
<dbReference type="PDB" id="8XWM">
    <property type="method" value="EM"/>
    <property type="resolution" value="3.71 A"/>
    <property type="chains" value="R=2-360"/>
</dbReference>
<dbReference type="PDB" id="8XWN">
    <property type="method" value="EM"/>
    <property type="resolution" value="3.29 A"/>
    <property type="chains" value="R=2-360"/>
</dbReference>
<dbReference type="PDB" id="8XWS">
    <property type="method" value="EM"/>
    <property type="resolution" value="3.06 A"/>
    <property type="chains" value="C/R=2-360"/>
</dbReference>
<dbReference type="PDB" id="8XWV">
    <property type="method" value="EM"/>
    <property type="resolution" value="3.07 A"/>
    <property type="chains" value="R=2-360"/>
</dbReference>
<dbReference type="PDB" id="8XX3">
    <property type="method" value="EM"/>
    <property type="resolution" value="3.38 A"/>
    <property type="chains" value="R=2-360"/>
</dbReference>
<dbReference type="PDB" id="8XX6">
    <property type="method" value="EM"/>
    <property type="resolution" value="2.99 A"/>
    <property type="chains" value="R=2-360"/>
</dbReference>
<dbReference type="PDB" id="8XX7">
    <property type="method" value="EM"/>
    <property type="resolution" value="3.32 A"/>
    <property type="chains" value="C/R=2-360"/>
</dbReference>
<dbReference type="PDB" id="8XXH">
    <property type="method" value="EM"/>
    <property type="resolution" value="2.80 A"/>
    <property type="chains" value="R=2-360"/>
</dbReference>
<dbReference type="PDB" id="8XXR">
    <property type="method" value="EM"/>
    <property type="resolution" value="3.17 A"/>
    <property type="chains" value="R=2-360"/>
</dbReference>
<dbReference type="PDB" id="8XXX">
    <property type="method" value="EM"/>
    <property type="resolution" value="3.17 A"/>
    <property type="chains" value="R=2-360"/>
</dbReference>
<dbReference type="PDBsum" id="4Q3H"/>
<dbReference type="PDBsum" id="5TYT"/>
<dbReference type="PDBsum" id="6KVA"/>
<dbReference type="PDBsum" id="6KVF"/>
<dbReference type="PDBsum" id="6LFM"/>
<dbReference type="PDBsum" id="6LFO"/>
<dbReference type="PDBsum" id="8XVU"/>
<dbReference type="PDBsum" id="8XWA"/>
<dbReference type="PDBsum" id="8XWF"/>
<dbReference type="PDBsum" id="8XWM"/>
<dbReference type="PDBsum" id="8XWN"/>
<dbReference type="PDBsum" id="8XWS"/>
<dbReference type="PDBsum" id="8XWV"/>
<dbReference type="PDBsum" id="8XX3"/>
<dbReference type="PDBsum" id="8XX6"/>
<dbReference type="PDBsum" id="8XX7"/>
<dbReference type="PDBsum" id="8XXH"/>
<dbReference type="PDBsum" id="8XXR"/>
<dbReference type="PDBsum" id="8XXX"/>
<dbReference type="EMDB" id="EMD-0877"/>
<dbReference type="EMDB" id="EMD-0879"/>
<dbReference type="EMDB" id="EMD-38719"/>
<dbReference type="EMDB" id="EMD-38732"/>
<dbReference type="EMDB" id="EMD-38734"/>
<dbReference type="EMDB" id="EMD-38738"/>
<dbReference type="EMDB" id="EMD-38739"/>
<dbReference type="EMDB" id="EMD-38742"/>
<dbReference type="EMDB" id="EMD-38743"/>
<dbReference type="EMDB" id="EMD-38744"/>
<dbReference type="EMDB" id="EMD-38747"/>
<dbReference type="EMDB" id="EMD-38748"/>
<dbReference type="EMDB" id="EMD-38749"/>
<dbReference type="EMDB" id="EMD-38759"/>
<dbReference type="EMDB" id="EMD-38764"/>
<dbReference type="SMR" id="P25025"/>
<dbReference type="BioGRID" id="109793">
    <property type="interactions" value="22"/>
</dbReference>
<dbReference type="ComplexPortal" id="CPX-9821">
    <property type="entry name" value="CXCL8-CXCR2 receptor-ligand complex"/>
</dbReference>
<dbReference type="CORUM" id="P25025"/>
<dbReference type="DIP" id="DIP-3782N"/>
<dbReference type="FunCoup" id="P25025">
    <property type="interactions" value="1020"/>
</dbReference>
<dbReference type="IntAct" id="P25025">
    <property type="interactions" value="44"/>
</dbReference>
<dbReference type="MINT" id="P25025"/>
<dbReference type="STRING" id="9606.ENSP00000319635"/>
<dbReference type="BindingDB" id="P25025"/>
<dbReference type="ChEMBL" id="CHEMBL2434"/>
<dbReference type="DrugBank" id="DB16822">
    <property type="generic name" value="AZD-5069"/>
</dbReference>
<dbReference type="DrugBank" id="DB00257">
    <property type="generic name" value="Clotrimazole"/>
</dbReference>
<dbReference type="DrugBank" id="DB11922">
    <property type="generic name" value="Danirixin"/>
</dbReference>
<dbReference type="DrugBank" id="DB12135">
    <property type="generic name" value="Elubrixin"/>
</dbReference>
<dbReference type="DrugBank" id="DB01050">
    <property type="generic name" value="Ibuprofen"/>
</dbReference>
<dbReference type="DrugBank" id="DB08951">
    <property type="generic name" value="Indoprofen"/>
</dbReference>
<dbReference type="DrugBank" id="DB12614">
    <property type="generic name" value="Reparixin"/>
</dbReference>
<dbReference type="DrugBank" id="DB19210">
    <property type="generic name" value="SX-682"/>
</dbReference>
<dbReference type="DrugBank" id="DB15466">
    <property type="generic name" value="Tallimustine"/>
</dbReference>
<dbReference type="DrugCentral" id="P25025"/>
<dbReference type="GuidetoPHARMACOLOGY" id="69"/>
<dbReference type="GlyCosmos" id="P25025">
    <property type="glycosylation" value="1 site, No reported glycans"/>
</dbReference>
<dbReference type="GlyGen" id="P25025">
    <property type="glycosylation" value="1 site"/>
</dbReference>
<dbReference type="iPTMnet" id="P25025"/>
<dbReference type="PhosphoSitePlus" id="P25025"/>
<dbReference type="BioMuta" id="CXCR2"/>
<dbReference type="DMDM" id="1352454"/>
<dbReference type="MassIVE" id="P25025"/>
<dbReference type="PaxDb" id="9606-ENSP00000319635"/>
<dbReference type="PeptideAtlas" id="P25025"/>
<dbReference type="ProteomicsDB" id="54246"/>
<dbReference type="ABCD" id="P25025">
    <property type="antibodies" value="21 sequenced antibodies"/>
</dbReference>
<dbReference type="Antibodypedia" id="4268">
    <property type="antibodies" value="1056 antibodies from 47 providers"/>
</dbReference>
<dbReference type="DNASU" id="3579"/>
<dbReference type="Ensembl" id="ENST00000318507.7">
    <property type="protein sequence ID" value="ENSP00000319635.2"/>
    <property type="gene ID" value="ENSG00000180871.8"/>
</dbReference>
<dbReference type="GeneID" id="3579"/>
<dbReference type="KEGG" id="hsa:3579"/>
<dbReference type="MANE-Select" id="ENST00000318507.7">
    <property type="protein sequence ID" value="ENSP00000319635.2"/>
    <property type="RefSeq nucleotide sequence ID" value="NM_001557.4"/>
    <property type="RefSeq protein sequence ID" value="NP_001548.1"/>
</dbReference>
<dbReference type="AGR" id="HGNC:6027"/>
<dbReference type="CTD" id="3579"/>
<dbReference type="DisGeNET" id="3579"/>
<dbReference type="GeneCards" id="CXCR2"/>
<dbReference type="HGNC" id="HGNC:6027">
    <property type="gene designation" value="CXCR2"/>
</dbReference>
<dbReference type="HPA" id="ENSG00000180871">
    <property type="expression patterns" value="Tissue enhanced (esophagus, lymphoid tissue)"/>
</dbReference>
<dbReference type="MalaCards" id="CXCR2"/>
<dbReference type="MIM" id="146928">
    <property type="type" value="gene"/>
</dbReference>
<dbReference type="MIM" id="619407">
    <property type="type" value="phenotype"/>
</dbReference>
<dbReference type="neXtProt" id="NX_P25025"/>
<dbReference type="OpenTargets" id="ENSG00000180871"/>
<dbReference type="Orphanet" id="420699">
    <property type="disease" value="Autosomal recessive severe congenital neutropenia due to CXCR2 deficiency"/>
</dbReference>
<dbReference type="PharmGKB" id="PA29843"/>
<dbReference type="VEuPathDB" id="HostDB:ENSG00000180871"/>
<dbReference type="eggNOG" id="KOG3656">
    <property type="taxonomic scope" value="Eukaryota"/>
</dbReference>
<dbReference type="GeneTree" id="ENSGT01050000244848"/>
<dbReference type="HOGENOM" id="CLU_009579_8_3_1"/>
<dbReference type="InParanoid" id="P25025"/>
<dbReference type="OMA" id="DTCPRRE"/>
<dbReference type="OrthoDB" id="9946013at2759"/>
<dbReference type="PAN-GO" id="P25025">
    <property type="GO annotations" value="7 GO annotations based on evolutionary models"/>
</dbReference>
<dbReference type="PhylomeDB" id="P25025"/>
<dbReference type="TreeFam" id="TF330966"/>
<dbReference type="PathwayCommons" id="P25025"/>
<dbReference type="Reactome" id="R-HSA-380108">
    <property type="pathway name" value="Chemokine receptors bind chemokines"/>
</dbReference>
<dbReference type="Reactome" id="R-HSA-418594">
    <property type="pathway name" value="G alpha (i) signalling events"/>
</dbReference>
<dbReference type="Reactome" id="R-HSA-6798695">
    <property type="pathway name" value="Neutrophil degranulation"/>
</dbReference>
<dbReference type="SignaLink" id="P25025"/>
<dbReference type="SIGNOR" id="P25025"/>
<dbReference type="BioGRID-ORCS" id="3579">
    <property type="hits" value="8 hits in 1145 CRISPR screens"/>
</dbReference>
<dbReference type="ChiTaRS" id="CXCR2">
    <property type="organism name" value="human"/>
</dbReference>
<dbReference type="GenomeRNAi" id="3579"/>
<dbReference type="Pharos" id="P25025">
    <property type="development level" value="Tchem"/>
</dbReference>
<dbReference type="PRO" id="PR:P25025"/>
<dbReference type="Proteomes" id="UP000005640">
    <property type="component" value="Chromosome 2"/>
</dbReference>
<dbReference type="RNAct" id="P25025">
    <property type="molecule type" value="protein"/>
</dbReference>
<dbReference type="Bgee" id="ENSG00000180871">
    <property type="expression patterns" value="Expressed in blood and 133 other cell types or tissues"/>
</dbReference>
<dbReference type="ExpressionAtlas" id="P25025">
    <property type="expression patterns" value="baseline and differential"/>
</dbReference>
<dbReference type="GO" id="GO:0009986">
    <property type="term" value="C:cell surface"/>
    <property type="evidence" value="ECO:0000314"/>
    <property type="project" value="UniProtKB"/>
</dbReference>
<dbReference type="GO" id="GO:0009897">
    <property type="term" value="C:external side of plasma membrane"/>
    <property type="evidence" value="ECO:0000318"/>
    <property type="project" value="GO_Central"/>
</dbReference>
<dbReference type="GO" id="GO:0042629">
    <property type="term" value="C:mast cell granule"/>
    <property type="evidence" value="ECO:0000314"/>
    <property type="project" value="UniProtKB"/>
</dbReference>
<dbReference type="GO" id="GO:0016020">
    <property type="term" value="C:membrane"/>
    <property type="evidence" value="ECO:0000314"/>
    <property type="project" value="UniProtKB"/>
</dbReference>
<dbReference type="GO" id="GO:0015630">
    <property type="term" value="C:microtubule cytoskeleton"/>
    <property type="evidence" value="ECO:0000314"/>
    <property type="project" value="HPA"/>
</dbReference>
<dbReference type="GO" id="GO:0072686">
    <property type="term" value="C:mitotic spindle"/>
    <property type="evidence" value="ECO:0000314"/>
    <property type="project" value="HPA"/>
</dbReference>
<dbReference type="GO" id="GO:0005654">
    <property type="term" value="C:nucleoplasm"/>
    <property type="evidence" value="ECO:0000314"/>
    <property type="project" value="HPA"/>
</dbReference>
<dbReference type="GO" id="GO:0005886">
    <property type="term" value="C:plasma membrane"/>
    <property type="evidence" value="ECO:0000314"/>
    <property type="project" value="HPA"/>
</dbReference>
<dbReference type="GO" id="GO:0030667">
    <property type="term" value="C:secretory granule membrane"/>
    <property type="evidence" value="ECO:0000304"/>
    <property type="project" value="Reactome"/>
</dbReference>
<dbReference type="GO" id="GO:0019957">
    <property type="term" value="F:C-C chemokine binding"/>
    <property type="evidence" value="ECO:0000318"/>
    <property type="project" value="GO_Central"/>
</dbReference>
<dbReference type="GO" id="GO:0016493">
    <property type="term" value="F:C-C chemokine receptor activity"/>
    <property type="evidence" value="ECO:0000318"/>
    <property type="project" value="GO_Central"/>
</dbReference>
<dbReference type="GO" id="GO:0016494">
    <property type="term" value="F:C-X-C chemokine receptor activity"/>
    <property type="evidence" value="ECO:0000314"/>
    <property type="project" value="UniProtKB"/>
</dbReference>
<dbReference type="GO" id="GO:0004930">
    <property type="term" value="F:G protein-coupled receptor activity"/>
    <property type="evidence" value="ECO:0000314"/>
    <property type="project" value="UniProtKB"/>
</dbReference>
<dbReference type="GO" id="GO:0019959">
    <property type="term" value="F:interleukin-8 binding"/>
    <property type="evidence" value="ECO:0000353"/>
    <property type="project" value="UniProtKB"/>
</dbReference>
<dbReference type="GO" id="GO:0004918">
    <property type="term" value="F:interleukin-8 receptor activity"/>
    <property type="evidence" value="ECO:0000314"/>
    <property type="project" value="UniProtKB"/>
</dbReference>
<dbReference type="GO" id="GO:0019722">
    <property type="term" value="P:calcium-mediated signaling"/>
    <property type="evidence" value="ECO:0000318"/>
    <property type="project" value="GO_Central"/>
</dbReference>
<dbReference type="GO" id="GO:0007166">
    <property type="term" value="P:cell surface receptor signaling pathway"/>
    <property type="evidence" value="ECO:0000314"/>
    <property type="project" value="UniProtKB"/>
</dbReference>
<dbReference type="GO" id="GO:0006968">
    <property type="term" value="P:cellular defense response"/>
    <property type="evidence" value="ECO:0000314"/>
    <property type="project" value="UniProtKB"/>
</dbReference>
<dbReference type="GO" id="GO:0006935">
    <property type="term" value="P:chemotaxis"/>
    <property type="evidence" value="ECO:0000314"/>
    <property type="project" value="UniProtKB"/>
</dbReference>
<dbReference type="GO" id="GO:0002407">
    <property type="term" value="P:dendritic cell chemotaxis"/>
    <property type="evidence" value="ECO:0000304"/>
    <property type="project" value="BHF-UCL"/>
</dbReference>
<dbReference type="GO" id="GO:0006955">
    <property type="term" value="P:immune response"/>
    <property type="evidence" value="ECO:0000318"/>
    <property type="project" value="GO_Central"/>
</dbReference>
<dbReference type="GO" id="GO:0006954">
    <property type="term" value="P:inflammatory response"/>
    <property type="evidence" value="ECO:0000304"/>
    <property type="project" value="ProtInc"/>
</dbReference>
<dbReference type="GO" id="GO:0038112">
    <property type="term" value="P:interleukin-8-mediated signaling pathway"/>
    <property type="evidence" value="ECO:0000314"/>
    <property type="project" value="UniProtKB"/>
</dbReference>
<dbReference type="GO" id="GO:0043066">
    <property type="term" value="P:negative regulation of apoptotic process"/>
    <property type="evidence" value="ECO:0007669"/>
    <property type="project" value="Ensembl"/>
</dbReference>
<dbReference type="GO" id="GO:0042119">
    <property type="term" value="P:neutrophil activation"/>
    <property type="evidence" value="ECO:0000314"/>
    <property type="project" value="UniProtKB"/>
</dbReference>
<dbReference type="GO" id="GO:0030593">
    <property type="term" value="P:neutrophil chemotaxis"/>
    <property type="evidence" value="ECO:0000314"/>
    <property type="project" value="UniProtKB"/>
</dbReference>
<dbReference type="GO" id="GO:0007200">
    <property type="term" value="P:phospholipase C-activating G protein-coupled receptor signaling pathway"/>
    <property type="evidence" value="ECO:0000314"/>
    <property type="project" value="UniProtKB"/>
</dbReference>
<dbReference type="GO" id="GO:0008284">
    <property type="term" value="P:positive regulation of cell population proliferation"/>
    <property type="evidence" value="ECO:0000314"/>
    <property type="project" value="UniProtKB"/>
</dbReference>
<dbReference type="GO" id="GO:0007204">
    <property type="term" value="P:positive regulation of cytosolic calcium ion concentration"/>
    <property type="evidence" value="ECO:0000318"/>
    <property type="project" value="GO_Central"/>
</dbReference>
<dbReference type="GO" id="GO:0031623">
    <property type="term" value="P:receptor internalization"/>
    <property type="evidence" value="ECO:0000314"/>
    <property type="project" value="UniProtKB"/>
</dbReference>
<dbReference type="GO" id="GO:0007165">
    <property type="term" value="P:signal transduction"/>
    <property type="evidence" value="ECO:0000304"/>
    <property type="project" value="ProtInc"/>
</dbReference>
<dbReference type="CDD" id="cd15178">
    <property type="entry name" value="7tmA_CXCR1_2"/>
    <property type="match status" value="1"/>
</dbReference>
<dbReference type="FunFam" id="1.20.1070.10:FF:000157">
    <property type="entry name" value="C-X-C chemokine receptor type 2"/>
    <property type="match status" value="1"/>
</dbReference>
<dbReference type="Gene3D" id="1.20.1070.10">
    <property type="entry name" value="Rhodopsin 7-helix transmembrane proteins"/>
    <property type="match status" value="1"/>
</dbReference>
<dbReference type="IDEAL" id="IID00625"/>
<dbReference type="InterPro" id="IPR050119">
    <property type="entry name" value="CCR1-9-like"/>
</dbReference>
<dbReference type="InterPro" id="IPR000057">
    <property type="entry name" value="Chemokine_CXCR2"/>
</dbReference>
<dbReference type="InterPro" id="IPR000174">
    <property type="entry name" value="Chemokine_CXCR_1/2"/>
</dbReference>
<dbReference type="InterPro" id="IPR000276">
    <property type="entry name" value="GPCR_Rhodpsn"/>
</dbReference>
<dbReference type="InterPro" id="IPR017452">
    <property type="entry name" value="GPCR_Rhodpsn_7TM"/>
</dbReference>
<dbReference type="PANTHER" id="PTHR10489:SF689">
    <property type="entry name" value="C-X-C CHEMOKINE RECEPTOR TYPE 2"/>
    <property type="match status" value="1"/>
</dbReference>
<dbReference type="PANTHER" id="PTHR10489">
    <property type="entry name" value="CELL ADHESION MOLECULE"/>
    <property type="match status" value="1"/>
</dbReference>
<dbReference type="Pfam" id="PF00001">
    <property type="entry name" value="7tm_1"/>
    <property type="match status" value="1"/>
</dbReference>
<dbReference type="PRINTS" id="PR00237">
    <property type="entry name" value="GPCRRHODOPSN"/>
</dbReference>
<dbReference type="PRINTS" id="PR00427">
    <property type="entry name" value="INTRLEUKIN8R"/>
</dbReference>
<dbReference type="PRINTS" id="PR00573">
    <property type="entry name" value="INTRLEUKN8BR"/>
</dbReference>
<dbReference type="SUPFAM" id="SSF81321">
    <property type="entry name" value="Family A G protein-coupled receptor-like"/>
    <property type="match status" value="1"/>
</dbReference>
<dbReference type="PROSITE" id="PS00237">
    <property type="entry name" value="G_PROTEIN_RECEP_F1_1"/>
    <property type="match status" value="1"/>
</dbReference>
<dbReference type="PROSITE" id="PS50262">
    <property type="entry name" value="G_PROTEIN_RECEP_F1_2"/>
    <property type="match status" value="1"/>
</dbReference>
<name>CXCR2_HUMAN</name>
<reference key="1">
    <citation type="journal article" date="1991" name="Science">
        <title>Cloning of complementary DNA encoding a functional human interleukin-8 receptor.</title>
        <authorList>
            <person name="Murphy P.M."/>
            <person name="Tiffany H.L."/>
        </authorList>
    </citation>
    <scope>NUCLEOTIDE SEQUENCE [MRNA]</scope>
    <scope>INTERACTION WITH IL8</scope>
</reference>
<reference key="2">
    <citation type="journal article" date="1993" name="Mol. Immunol.">
        <title>Molecular characterization of receptors for human interleukin-8, GRO/melanoma growth-stimulatory activity and neutrophil activating peptide-2.</title>
        <authorList>
            <person name="Cerretti D.P."/>
            <person name="Kozlosky C.J."/>
            <person name="Vanden Bos T."/>
            <person name="Nelson N."/>
            <person name="Gearing D.P."/>
            <person name="Beckmann M.P."/>
        </authorList>
    </citation>
    <scope>NUCLEOTIDE SEQUENCE [MRNA]</scope>
    <scope>CHARACTERIZATION</scope>
</reference>
<reference key="3">
    <citation type="journal article" date="1994" name="J. Biol. Chem.">
        <title>Structure, genomic organization, and expression of the human interleukin-8 receptor B gene.</title>
        <authorList>
            <person name="Sprenger H."/>
            <person name="Lloyd A.R."/>
            <person name="Lautens L.L."/>
            <person name="Bonner T.I."/>
            <person name="Kelvin D.J."/>
        </authorList>
    </citation>
    <scope>NUCLEOTIDE SEQUENCE [GENOMIC DNA / MRNA]</scope>
</reference>
<reference key="4">
    <citation type="journal article" date="1994" name="J. Biol. Chem.">
        <title>Comparison of the genomic organization and promoter function for human interleukin-8 receptors A and B.</title>
        <authorList>
            <person name="Ahuja S.K."/>
            <person name="Shetty A."/>
            <person name="Tiffany H.L."/>
            <person name="Murphy P.M."/>
        </authorList>
    </citation>
    <scope>NUCLEOTIDE SEQUENCE [GENOMIC DNA]</scope>
    <source>
        <tissue>Placenta</tissue>
    </source>
</reference>
<reference key="5">
    <citation type="submission" date="2004-08" db="EMBL/GenBank/DDBJ databases">
        <authorList>
            <consortium name="SeattleSNPs variation discovery resource"/>
        </authorList>
    </citation>
    <scope>NUCLEOTIDE SEQUENCE [GENOMIC DNA]</scope>
</reference>
<reference key="6">
    <citation type="journal article" date="2004" name="Genome Res.">
        <title>The status, quality, and expansion of the NIH full-length cDNA project: the Mammalian Gene Collection (MGC).</title>
        <authorList>
            <consortium name="The MGC Project Team"/>
        </authorList>
    </citation>
    <scope>NUCLEOTIDE SEQUENCE [LARGE SCALE MRNA]</scope>
    <source>
        <tissue>Brain</tissue>
    </source>
</reference>
<reference key="7">
    <citation type="journal article" date="2000" name="Genes Immun.">
        <title>Single nucleotide polymorphisms in the coding regions of human CXC-chemokine receptors CXCR1, CXCR2 and CXCR3.</title>
        <authorList>
            <person name="Kato H."/>
            <person name="Tsuchiya N."/>
            <person name="Tokunaga K."/>
        </authorList>
    </citation>
    <scope>NUCLEOTIDE SEQUENCE [GENOMIC DNA] OF 52-162 AND 191-301</scope>
    <scope>VARIANT CYS-80</scope>
</reference>
<reference key="8">
    <citation type="journal article" date="1992" name="J. Biol. Chem.">
        <title>Characterization of two high affinity human interleukin-8 receptors.</title>
        <authorList>
            <person name="Lee J."/>
            <person name="Horuk R."/>
            <person name="Rice G.C."/>
            <person name="Bennett G.L."/>
            <person name="Camerato T."/>
            <person name="Wood W.I."/>
        </authorList>
    </citation>
    <scope>CHARACTERIZATION</scope>
</reference>
<reference key="9">
    <citation type="journal article" date="1996" name="J. Biol. Chem.">
        <title>Physical association of Gi2alpha with interleukin-8 receptors.</title>
        <authorList>
            <person name="Damaj B.B."/>
            <person name="McColl S.R."/>
            <person name="Mahana W."/>
            <person name="Crouch M.F."/>
            <person name="Naccache P.H."/>
        </authorList>
    </citation>
    <scope>FUNCTION</scope>
    <scope>INTERACTION WITH GNAI2</scope>
</reference>
<reference key="10">
    <citation type="journal article" date="1997" name="J. Biol. Chem.">
        <title>Ligand-induced desensitization of the human CXC chemokine receptor-2 is modulated by multiple serine residues in the carboxyl-terminal domain of the receptor.</title>
        <authorList>
            <person name="Mueller S.G."/>
            <person name="White J.R."/>
            <person name="Schraw W.P."/>
            <person name="Lam V."/>
            <person name="Richmond A."/>
        </authorList>
    </citation>
    <scope>PHOSPHORYLATION AT SER-347; SER-351; SER-352 AND SER-353</scope>
</reference>
<reference key="11">
    <citation type="journal article" date="2012" name="EMBO J.">
        <title>Staphylococcus aureus Staphopain A inhibits CXCR2-dependent neutrophil activation and chemotaxis.</title>
        <authorList>
            <person name="Laarman A.J."/>
            <person name="Mijnheer G."/>
            <person name="Mootz J.M."/>
            <person name="van Rooijen W.J."/>
            <person name="Ruyken M."/>
            <person name="Malone C.L."/>
            <person name="Heezius E.C."/>
            <person name="Ward R."/>
            <person name="Milligan G."/>
            <person name="van Strijp J.A."/>
            <person name="de Haas C.J."/>
            <person name="Horswill A.R."/>
            <person name="van Kessel K.P."/>
            <person name="Rooijakkers S.H."/>
        </authorList>
    </citation>
    <scope>CLEAVAGE BY STAPHYLOCOCCUS AUREUS STAPHOPAIN A (MICROBIAL INFECTION)</scope>
</reference>
<reference key="12">
    <citation type="journal article" date="2014" name="Nat. Genet.">
        <title>Rare and low-frequency coding variants in CXCR2 and other genes are associated with hematological traits.</title>
        <authorList>
            <person name="Auer P.L."/>
            <person name="Teumer A."/>
            <person name="Schick U."/>
            <person name="O'Shaughnessy A."/>
            <person name="Lo K.S."/>
            <person name="Chami N."/>
            <person name="Carlson C."/>
            <person name="de Denus S."/>
            <person name="Dube M.P."/>
            <person name="Haessler J."/>
            <person name="Jackson R.D."/>
            <person name="Kooperberg C."/>
            <person name="Perreault L.P."/>
            <person name="Nauck M."/>
            <person name="Peters U."/>
            <person name="Rioux J.D."/>
            <person name="Schmidt F."/>
            <person name="Turcot V."/>
            <person name="Voelker U."/>
            <person name="Voelzke H."/>
            <person name="Greinacher A."/>
            <person name="Hsu L."/>
            <person name="Tardif J.C."/>
            <person name="Diaz G.A."/>
            <person name="Reiner A.P."/>
            <person name="Lettre G."/>
        </authorList>
    </citation>
    <scope>INVOLVEMENT IN WHIMS2</scope>
</reference>
<feature type="chain" id="PRO_0000069337" description="C-X-C chemokine receptor type 2">
    <location>
        <begin position="1"/>
        <end position="360"/>
    </location>
</feature>
<feature type="topological domain" description="Extracellular" evidence="1">
    <location>
        <begin position="1"/>
        <end position="48"/>
    </location>
</feature>
<feature type="transmembrane region" description="Helical; Name=1" evidence="1">
    <location>
        <begin position="49"/>
        <end position="75"/>
    </location>
</feature>
<feature type="topological domain" description="Cytoplasmic" evidence="1">
    <location>
        <begin position="76"/>
        <end position="84"/>
    </location>
</feature>
<feature type="transmembrane region" description="Helical; Name=2" evidence="1">
    <location>
        <begin position="85"/>
        <end position="105"/>
    </location>
</feature>
<feature type="topological domain" description="Extracellular" evidence="1">
    <location>
        <begin position="106"/>
        <end position="120"/>
    </location>
</feature>
<feature type="transmembrane region" description="Helical; Name=3" evidence="1">
    <location>
        <begin position="121"/>
        <end position="142"/>
    </location>
</feature>
<feature type="topological domain" description="Cytoplasmic" evidence="1">
    <location>
        <begin position="143"/>
        <end position="163"/>
    </location>
</feature>
<feature type="transmembrane region" description="Helical; Name=4" evidence="1">
    <location>
        <begin position="164"/>
        <end position="183"/>
    </location>
</feature>
<feature type="topological domain" description="Extracellular" evidence="1">
    <location>
        <begin position="184"/>
        <end position="208"/>
    </location>
</feature>
<feature type="transmembrane region" description="Helical; Name=5" evidence="1">
    <location>
        <begin position="209"/>
        <end position="231"/>
    </location>
</feature>
<feature type="topological domain" description="Cytoplasmic" evidence="1">
    <location>
        <begin position="232"/>
        <end position="251"/>
    </location>
</feature>
<feature type="transmembrane region" description="Helical; Name=6" evidence="1">
    <location>
        <begin position="252"/>
        <end position="273"/>
    </location>
</feature>
<feature type="topological domain" description="Extracellular" evidence="1">
    <location>
        <begin position="274"/>
        <end position="294"/>
    </location>
</feature>
<feature type="transmembrane region" description="Helical; Name=7" evidence="1">
    <location>
        <begin position="295"/>
        <end position="315"/>
    </location>
</feature>
<feature type="topological domain" description="Cytoplasmic" evidence="1">
    <location>
        <begin position="316"/>
        <end position="360"/>
    </location>
</feature>
<feature type="site" description="(Microbial infection) Cleavage; by Staphylococcus aureus/SspP" evidence="5">
    <location>
        <begin position="35"/>
        <end position="36"/>
    </location>
</feature>
<feature type="modified residue" description="Phosphoserine" evidence="9">
    <location>
        <position position="347"/>
    </location>
</feature>
<feature type="modified residue" description="Phosphoserine" evidence="9">
    <location>
        <position position="351"/>
    </location>
</feature>
<feature type="modified residue" description="Phosphoserine" evidence="9">
    <location>
        <position position="352"/>
    </location>
</feature>
<feature type="modified residue" description="Phosphoserine" evidence="9">
    <location>
        <position position="353"/>
    </location>
</feature>
<feature type="glycosylation site" description="N-linked (GlcNAc...) asparagine" evidence="1">
    <location>
        <position position="22"/>
    </location>
</feature>
<feature type="disulfide bond" evidence="2">
    <location>
        <begin position="119"/>
        <end position="196"/>
    </location>
</feature>
<feature type="sequence variant" id="VAR_014679" description="In dbSNP:rs138773569." evidence="3">
    <original>R</original>
    <variation>C</variation>
    <location>
        <position position="80"/>
    </location>
</feature>
<feature type="helix" evidence="11">
    <location>
        <begin position="43"/>
        <end position="45"/>
    </location>
</feature>
<feature type="helix" evidence="11">
    <location>
        <begin position="48"/>
        <end position="74"/>
    </location>
</feature>
<feature type="helix" evidence="11">
    <location>
        <begin position="82"/>
        <end position="97"/>
    </location>
</feature>
<feature type="helix" evidence="11">
    <location>
        <begin position="98"/>
        <end position="100"/>
    </location>
</feature>
<feature type="helix" evidence="11">
    <location>
        <begin position="101"/>
        <end position="110"/>
    </location>
</feature>
<feature type="helix" evidence="11">
    <location>
        <begin position="116"/>
        <end position="135"/>
    </location>
</feature>
<feature type="helix" evidence="11">
    <location>
        <begin position="137"/>
        <end position="146"/>
    </location>
</feature>
<feature type="turn" evidence="11">
    <location>
        <begin position="147"/>
        <end position="150"/>
    </location>
</feature>
<feature type="strand" evidence="11">
    <location>
        <begin position="151"/>
        <end position="153"/>
    </location>
</feature>
<feature type="helix" evidence="11">
    <location>
        <begin position="156"/>
        <end position="160"/>
    </location>
</feature>
<feature type="helix" evidence="11">
    <location>
        <begin position="162"/>
        <end position="183"/>
    </location>
</feature>
<feature type="strand" evidence="10">
    <location>
        <begin position="190"/>
        <end position="192"/>
    </location>
</feature>
<feature type="strand" evidence="10">
    <location>
        <begin position="201"/>
        <end position="203"/>
    </location>
</feature>
<feature type="helix" evidence="11">
    <location>
        <begin position="204"/>
        <end position="218"/>
    </location>
</feature>
<feature type="helix" evidence="11">
    <location>
        <begin position="221"/>
        <end position="227"/>
    </location>
</feature>
<feature type="turn" evidence="11">
    <location>
        <begin position="228"/>
        <end position="230"/>
    </location>
</feature>
<feature type="helix" evidence="11">
    <location>
        <begin position="231"/>
        <end position="240"/>
    </location>
</feature>
<feature type="helix" evidence="11">
    <location>
        <begin position="246"/>
        <end position="263"/>
    </location>
</feature>
<feature type="helix" evidence="11">
    <location>
        <begin position="267"/>
        <end position="278"/>
    </location>
</feature>
<feature type="helix" evidence="11">
    <location>
        <begin position="288"/>
        <end position="304"/>
    </location>
</feature>
<feature type="turn" evidence="11">
    <location>
        <begin position="305"/>
        <end position="308"/>
    </location>
</feature>
<feature type="helix" evidence="11">
    <location>
        <begin position="310"/>
        <end position="314"/>
    </location>
</feature>
<feature type="turn" evidence="11">
    <location>
        <begin position="315"/>
        <end position="317"/>
    </location>
</feature>
<feature type="helix" evidence="11">
    <location>
        <begin position="319"/>
        <end position="331"/>
    </location>
</feature>
<keyword id="KW-0002">3D-structure</keyword>
<keyword id="KW-1003">Cell membrane</keyword>
<keyword id="KW-0145">Chemotaxis</keyword>
<keyword id="KW-1015">Disulfide bond</keyword>
<keyword id="KW-0297">G-protein coupled receptor</keyword>
<keyword id="KW-0325">Glycoprotein</keyword>
<keyword id="KW-0472">Membrane</keyword>
<keyword id="KW-0597">Phosphoprotein</keyword>
<keyword id="KW-1267">Proteomics identification</keyword>
<keyword id="KW-0675">Receptor</keyword>
<keyword id="KW-1185">Reference proteome</keyword>
<keyword id="KW-0807">Transducer</keyword>
<keyword id="KW-0812">Transmembrane</keyword>
<keyword id="KW-1133">Transmembrane helix</keyword>
<protein>
    <recommendedName>
        <fullName>C-X-C chemokine receptor type 2</fullName>
        <shortName>CXC-R2</shortName>
        <shortName>CXCR-2</shortName>
    </recommendedName>
    <alternativeName>
        <fullName>CDw128b</fullName>
    </alternativeName>
    <alternativeName>
        <fullName>GRO/MGSA receptor</fullName>
    </alternativeName>
    <alternativeName>
        <fullName>High affinity interleukin-8 receptor B</fullName>
        <shortName>IL-8R B</shortName>
    </alternativeName>
    <alternativeName>
        <fullName>IL-8 receptor type 2</fullName>
    </alternativeName>
    <cdAntigenName>CD182</cdAntigenName>
</protein>
<proteinExistence type="evidence at protein level"/>
<gene>
    <name type="primary">CXCR2</name>
    <name type="synonym">IL8RB</name>
</gene>
<comment type="function">
    <text evidence="4 7">Receptor for interleukin-8 which is a powerful neutrophil chemotactic factor (PubMed:1891716). Binding of IL-8 to the receptor causes activation of neutrophils. This response is mediated via a G-protein that activates a phosphatidylinositol-calcium second messenger system (PubMed:8662698). Binds to IL-8 with high affinity. Also binds with high affinity to CXCL3, GRO/MGSA and NAP-2.</text>
</comment>
<comment type="subunit">
    <text evidence="4 7">Interacts with IL8 (PubMed:1891716). Interacts with GNAI2 (PubMed:8662698).</text>
</comment>
<comment type="interaction">
    <interactant intactId="EBI-2835281">
        <id>P25025</id>
    </interactant>
    <interactant intactId="EBI-12069500">
        <id>Q9HD20-3</id>
        <label>ATP13A1</label>
    </interactant>
    <organismsDiffer>false</organismsDiffer>
    <experiments>3</experiments>
</comment>
<comment type="interaction">
    <interactant intactId="EBI-2835281">
        <id>P25025</id>
    </interactant>
    <interactant intactId="EBI-12003442">
        <id>Q8WVX3-2</id>
        <label>C4orf3</label>
    </interactant>
    <organismsDiffer>false</organismsDiffer>
    <experiments>3</experiments>
</comment>
<comment type="interaction">
    <interactant intactId="EBI-2835281">
        <id>P25025</id>
    </interactant>
    <interactant intactId="EBI-2622890">
        <id>P04233</id>
        <label>CD74</label>
    </interactant>
    <organismsDiffer>false</organismsDiffer>
    <experiments>2</experiments>
</comment>
<comment type="interaction">
    <interactant intactId="EBI-2835281">
        <id>P25025</id>
    </interactant>
    <interactant intactId="EBI-17766761">
        <id>Q8N7P3</id>
        <label>CLDN22</label>
    </interactant>
    <organismsDiffer>false</organismsDiffer>
    <experiments>3</experiments>
</comment>
<comment type="interaction">
    <interactant intactId="EBI-2835281">
        <id>P25025</id>
    </interactant>
    <interactant intactId="EBI-3917999">
        <id>P10145</id>
        <label>CXCL8</label>
    </interactant>
    <organismsDiffer>false</organismsDiffer>
    <experiments>3</experiments>
</comment>
<comment type="interaction">
    <interactant intactId="EBI-2835281">
        <id>P25025</id>
    </interactant>
    <interactant intactId="EBI-4319440">
        <id>P54849</id>
        <label>EMP1</label>
    </interactant>
    <organismsDiffer>false</organismsDiffer>
    <experiments>3</experiments>
</comment>
<comment type="interaction">
    <interactant intactId="EBI-2835281">
        <id>P25025</id>
    </interactant>
    <interactant intactId="EBI-724839">
        <id>Q14318</id>
        <label>FKBP8</label>
    </interactant>
    <organismsDiffer>false</organismsDiffer>
    <experiments>3</experiments>
</comment>
<comment type="interaction">
    <interactant intactId="EBI-2835281">
        <id>P25025</id>
    </interactant>
    <interactant intactId="EBI-45351003">
        <id>Q13304-2</id>
        <label>GPR17</label>
    </interactant>
    <organismsDiffer>false</organismsDiffer>
    <experiments>3</experiments>
</comment>
<comment type="interaction">
    <interactant intactId="EBI-2835281">
        <id>P25025</id>
    </interactant>
    <interactant intactId="EBI-297509">
        <id>P46940</id>
        <label>IQGAP1</label>
    </interactant>
    <organismsDiffer>false</organismsDiffer>
    <experiments>12</experiments>
</comment>
<comment type="interaction">
    <interactant intactId="EBI-2835281">
        <id>P25025</id>
    </interactant>
    <interactant intactId="EBI-18036244">
        <id>Q05940</id>
        <label>SLC18A2</label>
    </interactant>
    <organismsDiffer>false</organismsDiffer>
    <experiments>3</experiments>
</comment>
<comment type="interaction">
    <interactant intactId="EBI-2835281">
        <id>P25025</id>
    </interactant>
    <interactant intactId="EBI-12898013">
        <id>Q9NP94</id>
        <label>SLC39A2</label>
    </interactant>
    <organismsDiffer>false</organismsDiffer>
    <experiments>3</experiments>
</comment>
<comment type="interaction">
    <interactant intactId="EBI-2835281">
        <id>P25025</id>
    </interactant>
    <interactant intactId="EBI-8640191">
        <id>Q9NRQ5</id>
        <label>SMCO4</label>
    </interactant>
    <organismsDiffer>false</organismsDiffer>
    <experiments>3</experiments>
</comment>
<comment type="interaction">
    <interactant intactId="EBI-2835281">
        <id>P25025</id>
    </interactant>
    <interactant intactId="EBI-348587">
        <id>Q9BVK8</id>
        <label>TMEM147</label>
    </interactant>
    <organismsDiffer>false</organismsDiffer>
    <experiments>3</experiments>
</comment>
<comment type="interaction">
    <interactant intactId="EBI-2835281">
        <id>P25025</id>
    </interactant>
    <interactant intactId="EBI-11742770">
        <id>Q96HE8</id>
        <label>TMEM80</label>
    </interactant>
    <organismsDiffer>false</organismsDiffer>
    <experiments>3</experiments>
</comment>
<comment type="interaction">
    <interactant intactId="EBI-2835281">
        <id>P25025</id>
    </interactant>
    <interactant intactId="EBI-11988865">
        <id>A5PKU2</id>
        <label>TUSC5</label>
    </interactant>
    <organismsDiffer>false</organismsDiffer>
    <experiments>3</experiments>
</comment>
<comment type="subcellular location">
    <subcellularLocation>
        <location>Cell membrane</location>
        <topology>Multi-pass membrane protein</topology>
    </subcellularLocation>
</comment>
<comment type="PTM">
    <text evidence="8">Phosphorylated upon ligand binding; which is required for desensitization.</text>
</comment>
<comment type="PTM">
    <text evidence="5">(Microbial infection) Proteolytically cleaved by Staphylococcus aureus staphopain A/SspP. This cleavage inhibits CXCR2-dependent neutrophil activation and chemotaxis.</text>
</comment>
<comment type="disease" evidence="6">
    <disease id="DI-06160">
        <name>WHIM syndrome 2</name>
        <acronym>WHIMS2</acronym>
        <description>An autosomal recessive form of WHIM syndrome, a primary immunodeficiency disorder characterized by warts, hypogammaglobulinemia, infections, and myelokathexis. Myelokathexis is a unique form of non-cyclic severe congenital neutropenia caused by accumulation of mature and degenerating neutrophils in the bone marrow. Monocytopenia and lymphopenia, especially B lymphopenia, also commonly occur. There is significant phenotypic variation among patients, such that some individuals may have an incomplete form of the disorder in which one or more of the classic tetrad features are not present.</description>
        <dbReference type="MIM" id="619407"/>
    </disease>
    <text>The disease may be caused by variants affecting the gene represented in this entry.</text>
</comment>
<comment type="similarity">
    <text evidence="2">Belongs to the G-protein coupled receptor 1 family.</text>
</comment>
<comment type="online information" name="Wikipedia">
    <link uri="https://en.wikipedia.org/wiki/CXC_chemokine_receptors"/>
    <text>CXC chemokine receptors entry</text>
</comment>